<evidence type="ECO:0000255" key="1">
    <source>
        <dbReference type="HAMAP-Rule" id="MF_00476"/>
    </source>
</evidence>
<keyword id="KW-0238">DNA-binding</keyword>
<keyword id="KW-0479">Metal-binding</keyword>
<keyword id="KW-0533">Nickel</keyword>
<keyword id="KW-0678">Repressor</keyword>
<keyword id="KW-0804">Transcription</keyword>
<keyword id="KW-0805">Transcription regulation</keyword>
<sequence length="133" mass="15094">MQRVTITLDDDLLETLDSLSQRRGYNNRSEAIRDILRSALAQEATQQHGTQGFAVLSYVYEHEKRDLASRIVSTQHHHHDLSVATLHVHINHDDCLEIAVLKGDMGDVQHFADDVIAQRGVRHGHLQCLPKED</sequence>
<proteinExistence type="inferred from homology"/>
<feature type="chain" id="PRO_1000206378" description="Nickel-responsive regulator">
    <location>
        <begin position="1"/>
        <end position="133"/>
    </location>
</feature>
<feature type="binding site" evidence="1">
    <location>
        <position position="76"/>
    </location>
    <ligand>
        <name>Ni(2+)</name>
        <dbReference type="ChEBI" id="CHEBI:49786"/>
    </ligand>
</feature>
<feature type="binding site" evidence="1">
    <location>
        <position position="87"/>
    </location>
    <ligand>
        <name>Ni(2+)</name>
        <dbReference type="ChEBI" id="CHEBI:49786"/>
    </ligand>
</feature>
<feature type="binding site" evidence="1">
    <location>
        <position position="89"/>
    </location>
    <ligand>
        <name>Ni(2+)</name>
        <dbReference type="ChEBI" id="CHEBI:49786"/>
    </ligand>
</feature>
<feature type="binding site" evidence="1">
    <location>
        <position position="95"/>
    </location>
    <ligand>
        <name>Ni(2+)</name>
        <dbReference type="ChEBI" id="CHEBI:49786"/>
    </ligand>
</feature>
<comment type="function">
    <text evidence="1">Transcriptional repressor of the nikABCDE operon. Is active in the presence of excessive concentrations of intracellular nickel.</text>
</comment>
<comment type="cofactor">
    <cofactor evidence="1">
        <name>Ni(2+)</name>
        <dbReference type="ChEBI" id="CHEBI:49786"/>
    </cofactor>
    <text evidence="1">Binds 1 nickel ion per subunit.</text>
</comment>
<comment type="subunit">
    <text evidence="1">Homotetramer.</text>
</comment>
<comment type="similarity">
    <text evidence="1">Belongs to the transcriptional regulatory CopG/NikR family.</text>
</comment>
<organism>
    <name type="scientific">Escherichia coli (strain K12 / MC4100 / BW2952)</name>
    <dbReference type="NCBI Taxonomy" id="595496"/>
    <lineage>
        <taxon>Bacteria</taxon>
        <taxon>Pseudomonadati</taxon>
        <taxon>Pseudomonadota</taxon>
        <taxon>Gammaproteobacteria</taxon>
        <taxon>Enterobacterales</taxon>
        <taxon>Enterobacteriaceae</taxon>
        <taxon>Escherichia</taxon>
    </lineage>
</organism>
<gene>
    <name evidence="1" type="primary">nikR</name>
    <name type="ordered locus">BWG_3172</name>
</gene>
<reference key="1">
    <citation type="journal article" date="2009" name="J. Bacteriol.">
        <title>Genomic sequencing reveals regulatory mutations and recombinational events in the widely used MC4100 lineage of Escherichia coli K-12.</title>
        <authorList>
            <person name="Ferenci T."/>
            <person name="Zhou Z."/>
            <person name="Betteridge T."/>
            <person name="Ren Y."/>
            <person name="Liu Y."/>
            <person name="Feng L."/>
            <person name="Reeves P.R."/>
            <person name="Wang L."/>
        </authorList>
    </citation>
    <scope>NUCLEOTIDE SEQUENCE [LARGE SCALE GENOMIC DNA]</scope>
    <source>
        <strain>K12 / MC4100 / BW2952</strain>
    </source>
</reference>
<protein>
    <recommendedName>
        <fullName evidence="1">Nickel-responsive regulator</fullName>
    </recommendedName>
</protein>
<name>NIKR_ECOBW</name>
<accession>C4ZW30</accession>
<dbReference type="EMBL" id="CP001396">
    <property type="protein sequence ID" value="ACR62988.1"/>
    <property type="molecule type" value="Genomic_DNA"/>
</dbReference>
<dbReference type="RefSeq" id="WP_001190062.1">
    <property type="nucleotide sequence ID" value="NC_012759.1"/>
</dbReference>
<dbReference type="SMR" id="C4ZW30"/>
<dbReference type="GeneID" id="93778510"/>
<dbReference type="KEGG" id="ebw:BWG_3172"/>
<dbReference type="HOGENOM" id="CLU_113319_1_4_6"/>
<dbReference type="GO" id="GO:0003700">
    <property type="term" value="F:DNA-binding transcription factor activity"/>
    <property type="evidence" value="ECO:0007669"/>
    <property type="project" value="UniProtKB-UniRule"/>
</dbReference>
<dbReference type="GO" id="GO:0016151">
    <property type="term" value="F:nickel cation binding"/>
    <property type="evidence" value="ECO:0007669"/>
    <property type="project" value="UniProtKB-UniRule"/>
</dbReference>
<dbReference type="GO" id="GO:0043565">
    <property type="term" value="F:sequence-specific DNA binding"/>
    <property type="evidence" value="ECO:0007669"/>
    <property type="project" value="UniProtKB-ARBA"/>
</dbReference>
<dbReference type="GO" id="GO:0010045">
    <property type="term" value="P:response to nickel cation"/>
    <property type="evidence" value="ECO:0007669"/>
    <property type="project" value="InterPro"/>
</dbReference>
<dbReference type="CDD" id="cd22231">
    <property type="entry name" value="RHH_NikR_HicB-like"/>
    <property type="match status" value="1"/>
</dbReference>
<dbReference type="FunFam" id="1.10.1220.10:FF:000001">
    <property type="entry name" value="Nickel-responsive regulator"/>
    <property type="match status" value="1"/>
</dbReference>
<dbReference type="FunFam" id="3.30.70.1150:FF:000002">
    <property type="entry name" value="Nickel-responsive regulator"/>
    <property type="match status" value="1"/>
</dbReference>
<dbReference type="Gene3D" id="3.30.70.1150">
    <property type="entry name" value="ACT-like. Chain A, domain 2"/>
    <property type="match status" value="1"/>
</dbReference>
<dbReference type="Gene3D" id="1.10.1220.10">
    <property type="entry name" value="Met repressor-like"/>
    <property type="match status" value="1"/>
</dbReference>
<dbReference type="HAMAP" id="MF_00476">
    <property type="entry name" value="NikR"/>
    <property type="match status" value="1"/>
</dbReference>
<dbReference type="InterPro" id="IPR027271">
    <property type="entry name" value="Acetolactate_synth/TF_NikR_C"/>
</dbReference>
<dbReference type="InterPro" id="IPR045865">
    <property type="entry name" value="ACT-like_dom_sf"/>
</dbReference>
<dbReference type="InterPro" id="IPR013321">
    <property type="entry name" value="Arc_rbn_hlx_hlx"/>
</dbReference>
<dbReference type="InterPro" id="IPR002145">
    <property type="entry name" value="CopG"/>
</dbReference>
<dbReference type="InterPro" id="IPR050192">
    <property type="entry name" value="CopG/NikR_regulator"/>
</dbReference>
<dbReference type="InterPro" id="IPR022988">
    <property type="entry name" value="Ni_resp_reg_NikR"/>
</dbReference>
<dbReference type="InterPro" id="IPR014160">
    <property type="entry name" value="Nickel_NikR_proteobac"/>
</dbReference>
<dbReference type="InterPro" id="IPR010985">
    <property type="entry name" value="Ribbon_hlx_hlx"/>
</dbReference>
<dbReference type="InterPro" id="IPR014864">
    <property type="entry name" value="TF_NikR_Ni-bd_C"/>
</dbReference>
<dbReference type="NCBIfam" id="TIGR02793">
    <property type="entry name" value="nikR"/>
    <property type="match status" value="1"/>
</dbReference>
<dbReference type="NCBIfam" id="NF002815">
    <property type="entry name" value="PRK02967.1"/>
    <property type="match status" value="1"/>
</dbReference>
<dbReference type="NCBIfam" id="NF003381">
    <property type="entry name" value="PRK04460.1"/>
    <property type="match status" value="1"/>
</dbReference>
<dbReference type="PANTHER" id="PTHR34719">
    <property type="entry name" value="NICKEL-RESPONSIVE REGULATOR"/>
    <property type="match status" value="1"/>
</dbReference>
<dbReference type="PANTHER" id="PTHR34719:SF2">
    <property type="entry name" value="NICKEL-RESPONSIVE REGULATOR"/>
    <property type="match status" value="1"/>
</dbReference>
<dbReference type="Pfam" id="PF08753">
    <property type="entry name" value="NikR_C"/>
    <property type="match status" value="1"/>
</dbReference>
<dbReference type="Pfam" id="PF01402">
    <property type="entry name" value="RHH_1"/>
    <property type="match status" value="1"/>
</dbReference>
<dbReference type="SUPFAM" id="SSF55021">
    <property type="entry name" value="ACT-like"/>
    <property type="match status" value="1"/>
</dbReference>
<dbReference type="SUPFAM" id="SSF47598">
    <property type="entry name" value="Ribbon-helix-helix"/>
    <property type="match status" value="1"/>
</dbReference>